<reference key="1">
    <citation type="journal article" date="2004" name="J. Biol. Chem.">
        <title>Characterization of the agent of 'high plains disease': mass spectrometry determines the sequence of the disease-specific protein.</title>
        <authorList>
            <person name="She Y.-M."/>
            <person name="Seifers D.L."/>
            <person name="Haber S."/>
            <person name="Ens W."/>
            <person name="Standing K.G."/>
        </authorList>
    </citation>
    <scope>PROTEIN SEQUENCE OF 2-289</scope>
    <scope>ACETYLATION AT ALA-2</scope>
    <scope>VARIANTS ASN-205 AND ASP-205</scope>
</reference>
<accession>P83550</accession>
<dbReference type="SMR" id="P83550"/>
<dbReference type="iPTMnet" id="P83550"/>
<dbReference type="GO" id="GO:0019028">
    <property type="term" value="C:viral capsid"/>
    <property type="evidence" value="ECO:0007669"/>
    <property type="project" value="UniProtKB-KW"/>
</dbReference>
<sequence length="289" mass="33395">MALSFKNSSGVLKAKTLKDGFVTSSDIETTVHDFSYEKPDLSSVDGFSLKSLLSSDGWHIVVAYQSVTNSERLNNNKKNNKTQRFKLFTFDIIVIPGLKPNKSKNVVSYNRFMALCIGMICYHKKWKVFNWSNKRYEDNKNTINFNEDDDFMNKLAMSAGFSKEHKYHWFYSTGFEYTFDIFPAEVIAMSLFRWSHRVELKIKYEHESDLVAPMVRQVTKRGNISDVMDIVGKDIIAKKYEEIVKDRSSIGIGTKYNDILDEFKDIFNKIDSSSLDSTIKNCFNKIDGE</sequence>
<comment type="subcellular location">
    <subcellularLocation>
        <location evidence="2">Virion</location>
    </subcellularLocation>
</comment>
<comment type="similarity">
    <text evidence="2">Belongs to the high plain virus capsid family.</text>
</comment>
<name>CAPSD_HPVKS</name>
<evidence type="ECO:0000269" key="1">
    <source>
    </source>
</evidence>
<evidence type="ECO:0000305" key="2"/>
<organismHost>
    <name type="scientific">Hordeum vulgare</name>
    <name type="common">Barley</name>
    <dbReference type="NCBI Taxonomy" id="4513"/>
</organismHost>
<organismHost>
    <name type="scientific">Triticum aestivum</name>
    <name type="common">Wheat</name>
    <dbReference type="NCBI Taxonomy" id="4565"/>
</organismHost>
<organismHost>
    <name type="scientific">Zea mays</name>
    <name type="common">Maize</name>
    <dbReference type="NCBI Taxonomy" id="4577"/>
</organismHost>
<keyword id="KW-0007">Acetylation</keyword>
<keyword id="KW-0167">Capsid protein</keyword>
<keyword id="KW-0903">Direct protein sequencing</keyword>
<keyword id="KW-0946">Virion</keyword>
<proteinExistence type="evidence at protein level"/>
<protein>
    <recommendedName>
        <fullName>Capsid protein</fullName>
    </recommendedName>
    <alternativeName>
        <fullName>Coat protein</fullName>
    </alternativeName>
</protein>
<organism evidence="2">
    <name type="scientific">High plains virus (isolate Kansas 96)</name>
    <dbReference type="NCBI Taxonomy" id="224782"/>
    <lineage>
        <taxon>Viruses</taxon>
        <taxon>Riboviria</taxon>
        <taxon>dsRNA viruses</taxon>
        <taxon>High Plains virus</taxon>
    </lineage>
</organism>
<feature type="initiator methionine" description="Removed" evidence="1">
    <location>
        <position position="1"/>
    </location>
</feature>
<feature type="chain" id="PRO_0000222949" description="Capsid protein">
    <location>
        <begin position="2"/>
        <end position="289"/>
    </location>
</feature>
<feature type="modified residue" description="N-acetylalanine; by host" evidence="1">
    <location>
        <position position="2"/>
    </location>
</feature>
<feature type="sequence variant" evidence="1">
    <original>E</original>
    <variation>D</variation>
    <location>
        <position position="205"/>
    </location>
</feature>
<feature type="sequence variant" evidence="1">
    <original>E</original>
    <variation>N</variation>
    <location>
        <position position="205"/>
    </location>
</feature>